<sequence>MKKSFLIMTDSSTTLDREWAKNNDVMILPLSILRSDHTLIVDDGIESKPERIYEDIDNGYTFQTSCTPYGVLIEAIEQKLQEYEKIIFIGISSGFSSQFNNAKNLEKEYQDKLFVVDTEDFGYSLEHLVYKIKAMLSNNISFGDILKMINKHHDYTSSFLACENITGLVRSGRIPKIIGTMLKLSKVTPIIKAEWKNHRAGMALNIRSAPHKILENINHVFDNQLNNHTIEKVCILQAGLSSERIDELKNDVINHFHVDKEKIVIRSGPPIFLVYVWKGALGIQVIANIPKKHVEKKH</sequence>
<evidence type="ECO:0000250" key="1"/>
<evidence type="ECO:0000250" key="2">
    <source>
        <dbReference type="UniProtKB" id="Q9X1H9"/>
    </source>
</evidence>
<evidence type="ECO:0000255" key="3">
    <source>
        <dbReference type="PROSITE-ProRule" id="PRU00815"/>
    </source>
</evidence>
<protein>
    <recommendedName>
        <fullName>DegV domain-containing protein UU535</fullName>
    </recommendedName>
</protein>
<proteinExistence type="inferred from homology"/>
<dbReference type="EMBL" id="AF222894">
    <property type="protein sequence ID" value="AAF30948.1"/>
    <property type="molecule type" value="Genomic_DNA"/>
</dbReference>
<dbReference type="RefSeq" id="WP_006688585.1">
    <property type="nucleotide sequence ID" value="NC_002162.1"/>
</dbReference>
<dbReference type="SMR" id="Q9PPV5"/>
<dbReference type="STRING" id="273119.UU535"/>
<dbReference type="EnsemblBacteria" id="AAF30948">
    <property type="protein sequence ID" value="AAF30948"/>
    <property type="gene ID" value="UU535"/>
</dbReference>
<dbReference type="GeneID" id="29672410"/>
<dbReference type="KEGG" id="uur:UU535"/>
<dbReference type="eggNOG" id="COG1307">
    <property type="taxonomic scope" value="Bacteria"/>
</dbReference>
<dbReference type="HOGENOM" id="CLU_949782_0_0_14"/>
<dbReference type="OrthoDB" id="388177at2"/>
<dbReference type="Proteomes" id="UP000000423">
    <property type="component" value="Chromosome"/>
</dbReference>
<dbReference type="GO" id="GO:0008289">
    <property type="term" value="F:lipid binding"/>
    <property type="evidence" value="ECO:0007669"/>
    <property type="project" value="UniProtKB-KW"/>
</dbReference>
<dbReference type="Gene3D" id="3.30.1180.10">
    <property type="match status" value="1"/>
</dbReference>
<dbReference type="Gene3D" id="3.40.50.10170">
    <property type="match status" value="1"/>
</dbReference>
<dbReference type="InterPro" id="IPR003797">
    <property type="entry name" value="DegV"/>
</dbReference>
<dbReference type="InterPro" id="IPR043168">
    <property type="entry name" value="DegV_C"/>
</dbReference>
<dbReference type="InterPro" id="IPR050270">
    <property type="entry name" value="DegV_domain_contain"/>
</dbReference>
<dbReference type="NCBIfam" id="TIGR00762">
    <property type="entry name" value="DegV"/>
    <property type="match status" value="1"/>
</dbReference>
<dbReference type="PANTHER" id="PTHR33434">
    <property type="entry name" value="DEGV DOMAIN-CONTAINING PROTEIN DR_1986-RELATED"/>
    <property type="match status" value="1"/>
</dbReference>
<dbReference type="PANTHER" id="PTHR33434:SF2">
    <property type="entry name" value="FATTY ACID-BINDING PROTEIN TM_1468"/>
    <property type="match status" value="1"/>
</dbReference>
<dbReference type="Pfam" id="PF02645">
    <property type="entry name" value="DegV"/>
    <property type="match status" value="1"/>
</dbReference>
<dbReference type="SUPFAM" id="SSF82549">
    <property type="entry name" value="DAK1/DegV-like"/>
    <property type="match status" value="1"/>
</dbReference>
<dbReference type="PROSITE" id="PS51482">
    <property type="entry name" value="DEGV"/>
    <property type="match status" value="1"/>
</dbReference>
<keyword id="KW-0446">Lipid-binding</keyword>
<keyword id="KW-1185">Reference proteome</keyword>
<gene>
    <name type="ordered locus">UU535</name>
</gene>
<reference key="1">
    <citation type="journal article" date="2000" name="Nature">
        <title>The complete sequence of the mucosal pathogen Ureaplasma urealyticum.</title>
        <authorList>
            <person name="Glass J.I."/>
            <person name="Lefkowitz E.J."/>
            <person name="Glass J.S."/>
            <person name="Heiner C.R."/>
            <person name="Chen E.Y."/>
            <person name="Cassell G.H."/>
        </authorList>
    </citation>
    <scope>NUCLEOTIDE SEQUENCE [LARGE SCALE GENOMIC DNA]</scope>
    <source>
        <strain>ATCC 700970</strain>
    </source>
</reference>
<name>Y535_UREPA</name>
<accession>Q9PPV5</accession>
<feature type="chain" id="PRO_0000209820" description="DegV domain-containing protein UU535">
    <location>
        <begin position="1"/>
        <end position="298"/>
    </location>
</feature>
<feature type="domain" description="DegV" evidence="3">
    <location>
        <begin position="5"/>
        <end position="287"/>
    </location>
</feature>
<feature type="binding site" evidence="2">
    <location>
        <position position="65"/>
    </location>
    <ligand>
        <name>hexadecanoate</name>
        <dbReference type="ChEBI" id="CHEBI:7896"/>
    </ligand>
</feature>
<feature type="binding site" evidence="2">
    <location>
        <position position="96"/>
    </location>
    <ligand>
        <name>hexadecanoate</name>
        <dbReference type="ChEBI" id="CHEBI:7896"/>
    </ligand>
</feature>
<comment type="function">
    <text evidence="1">May bind long-chain fatty acids, such as palmitate, and may play a role in lipid transport or fatty acid metabolism.</text>
</comment>
<organism>
    <name type="scientific">Ureaplasma parvum serovar 3 (strain ATCC 700970)</name>
    <dbReference type="NCBI Taxonomy" id="273119"/>
    <lineage>
        <taxon>Bacteria</taxon>
        <taxon>Bacillati</taxon>
        <taxon>Mycoplasmatota</taxon>
        <taxon>Mycoplasmoidales</taxon>
        <taxon>Mycoplasmoidaceae</taxon>
        <taxon>Ureaplasma</taxon>
    </lineage>
</organism>